<gene>
    <name type="primary">ponC4</name>
    <name type="ORF">DDB_G0286719</name>
</gene>
<dbReference type="EMBL" id="AAFI02000089">
    <property type="protein sequence ID" value="EAL64115.1"/>
    <property type="molecule type" value="Genomic_DNA"/>
</dbReference>
<dbReference type="RefSeq" id="XP_637640.1">
    <property type="nucleotide sequence ID" value="XM_632548.1"/>
</dbReference>
<dbReference type="FunCoup" id="Q54LC1">
    <property type="interactions" value="699"/>
</dbReference>
<dbReference type="STRING" id="44689.Q54LC1"/>
<dbReference type="GlyCosmos" id="Q54LC1">
    <property type="glycosylation" value="1 site, No reported glycans"/>
</dbReference>
<dbReference type="GlyGen" id="Q54LC1">
    <property type="glycosylation" value="2 sites"/>
</dbReference>
<dbReference type="PaxDb" id="44689-DDB0232289"/>
<dbReference type="EnsemblProtists" id="EAL64115">
    <property type="protein sequence ID" value="EAL64115"/>
    <property type="gene ID" value="DDB_G0286719"/>
</dbReference>
<dbReference type="GeneID" id="8625781"/>
<dbReference type="KEGG" id="ddi:DDB_G0286719"/>
<dbReference type="dictyBase" id="DDB_G0286719">
    <property type="gene designation" value="ponC4"/>
</dbReference>
<dbReference type="VEuPathDB" id="AmoebaDB:DDB_G0286719"/>
<dbReference type="HOGENOM" id="CLU_1771535_0_0_1"/>
<dbReference type="InParanoid" id="Q54LC1"/>
<dbReference type="PhylomeDB" id="Q54LC1"/>
<dbReference type="PRO" id="PR:Q54LC1"/>
<dbReference type="Proteomes" id="UP000002195">
    <property type="component" value="Chromosome 4"/>
</dbReference>
<dbReference type="GO" id="GO:0042599">
    <property type="term" value="C:lamellar body"/>
    <property type="evidence" value="ECO:0007005"/>
    <property type="project" value="dictyBase"/>
</dbReference>
<dbReference type="GO" id="GO:0016020">
    <property type="term" value="C:membrane"/>
    <property type="evidence" value="ECO:0000250"/>
    <property type="project" value="dictyBase"/>
</dbReference>
<dbReference type="GO" id="GO:0005886">
    <property type="term" value="C:plasma membrane"/>
    <property type="evidence" value="ECO:0007669"/>
    <property type="project" value="UniProtKB-SubCell"/>
</dbReference>
<dbReference type="GO" id="GO:0098552">
    <property type="term" value="C:side of membrane"/>
    <property type="evidence" value="ECO:0007669"/>
    <property type="project" value="UniProtKB-KW"/>
</dbReference>
<dbReference type="GO" id="GO:0051015">
    <property type="term" value="F:actin filament binding"/>
    <property type="evidence" value="ECO:0000250"/>
    <property type="project" value="dictyBase"/>
</dbReference>
<name>PONC4_DICDI</name>
<feature type="signal peptide" evidence="1">
    <location>
        <begin position="1"/>
        <end position="20"/>
    </location>
</feature>
<feature type="chain" id="PRO_0000312140" description="Ponticulin-like protein C4">
    <location>
        <begin position="21"/>
        <end position="118"/>
    </location>
</feature>
<feature type="propeptide" id="PRO_0000312141" description="Removed in mature form" evidence="1">
    <location>
        <begin position="119"/>
        <end position="147"/>
    </location>
</feature>
<feature type="lipid moiety-binding region" description="GPI-like-anchor amidated asparagine" evidence="1">
    <location>
        <position position="118"/>
    </location>
</feature>
<feature type="glycosylation site" description="N-linked (GlcNAc...) asparagine" evidence="1">
    <location>
        <position position="118"/>
    </location>
</feature>
<protein>
    <recommendedName>
        <fullName>Ponticulin-like protein C4</fullName>
    </recommendedName>
</protein>
<reference key="1">
    <citation type="journal article" date="2005" name="Nature">
        <title>The genome of the social amoeba Dictyostelium discoideum.</title>
        <authorList>
            <person name="Eichinger L."/>
            <person name="Pachebat J.A."/>
            <person name="Gloeckner G."/>
            <person name="Rajandream M.A."/>
            <person name="Sucgang R."/>
            <person name="Berriman M."/>
            <person name="Song J."/>
            <person name="Olsen R."/>
            <person name="Szafranski K."/>
            <person name="Xu Q."/>
            <person name="Tunggal B."/>
            <person name="Kummerfeld S."/>
            <person name="Madera M."/>
            <person name="Konfortov B.A."/>
            <person name="Rivero F."/>
            <person name="Bankier A.T."/>
            <person name="Lehmann R."/>
            <person name="Hamlin N."/>
            <person name="Davies R."/>
            <person name="Gaudet P."/>
            <person name="Fey P."/>
            <person name="Pilcher K."/>
            <person name="Chen G."/>
            <person name="Saunders D."/>
            <person name="Sodergren E.J."/>
            <person name="Davis P."/>
            <person name="Kerhornou A."/>
            <person name="Nie X."/>
            <person name="Hall N."/>
            <person name="Anjard C."/>
            <person name="Hemphill L."/>
            <person name="Bason N."/>
            <person name="Farbrother P."/>
            <person name="Desany B."/>
            <person name="Just E."/>
            <person name="Morio T."/>
            <person name="Rost R."/>
            <person name="Churcher C.M."/>
            <person name="Cooper J."/>
            <person name="Haydock S."/>
            <person name="van Driessche N."/>
            <person name="Cronin A."/>
            <person name="Goodhead I."/>
            <person name="Muzny D.M."/>
            <person name="Mourier T."/>
            <person name="Pain A."/>
            <person name="Lu M."/>
            <person name="Harper D."/>
            <person name="Lindsay R."/>
            <person name="Hauser H."/>
            <person name="James K.D."/>
            <person name="Quiles M."/>
            <person name="Madan Babu M."/>
            <person name="Saito T."/>
            <person name="Buchrieser C."/>
            <person name="Wardroper A."/>
            <person name="Felder M."/>
            <person name="Thangavelu M."/>
            <person name="Johnson D."/>
            <person name="Knights A."/>
            <person name="Loulseged H."/>
            <person name="Mungall K.L."/>
            <person name="Oliver K."/>
            <person name="Price C."/>
            <person name="Quail M.A."/>
            <person name="Urushihara H."/>
            <person name="Hernandez J."/>
            <person name="Rabbinowitsch E."/>
            <person name="Steffen D."/>
            <person name="Sanders M."/>
            <person name="Ma J."/>
            <person name="Kohara Y."/>
            <person name="Sharp S."/>
            <person name="Simmonds M.N."/>
            <person name="Spiegler S."/>
            <person name="Tivey A."/>
            <person name="Sugano S."/>
            <person name="White B."/>
            <person name="Walker D."/>
            <person name="Woodward J.R."/>
            <person name="Winckler T."/>
            <person name="Tanaka Y."/>
            <person name="Shaulsky G."/>
            <person name="Schleicher M."/>
            <person name="Weinstock G.M."/>
            <person name="Rosenthal A."/>
            <person name="Cox E.C."/>
            <person name="Chisholm R.L."/>
            <person name="Gibbs R.A."/>
            <person name="Loomis W.F."/>
            <person name="Platzer M."/>
            <person name="Kay R.R."/>
            <person name="Williams J.G."/>
            <person name="Dear P.H."/>
            <person name="Noegel A.A."/>
            <person name="Barrell B.G."/>
            <person name="Kuspa A."/>
        </authorList>
    </citation>
    <scope>NUCLEOTIDE SEQUENCE [LARGE SCALE GENOMIC DNA]</scope>
    <source>
        <strain>AX4</strain>
    </source>
</reference>
<reference key="2">
    <citation type="journal article" date="2008" name="Langmuir">
        <title>Minimal F-actin cytoskeletal system for planar supported phospholipid bilayers.</title>
        <authorList>
            <person name="Barfoot R.J."/>
            <person name="Sheikh K.H."/>
            <person name="Johnson B.R."/>
            <person name="Colyer J."/>
            <person name="Miles R.E."/>
            <person name="Jeuken L.J."/>
            <person name="Bushby R.J."/>
            <person name="Evans S.D."/>
        </authorList>
    </citation>
    <scope>FUNCTION</scope>
</reference>
<comment type="subcellular location">
    <subcellularLocation>
        <location evidence="2">Cell membrane</location>
        <topology evidence="2">Lipid-anchor</topology>
        <topology evidence="2">GPI-anchor</topology>
    </subcellularLocation>
</comment>
<comment type="PTM">
    <text evidence="2">The GPI-like-anchor contains a phosphoceramide group, rather than a phosphatidyl group.</text>
</comment>
<comment type="similarity">
    <text evidence="2">Belongs to the ponticulin family.</text>
</comment>
<comment type="caution">
    <text evidence="2">The Dictyosteliida are known to produce a glycosylsphingolipidinositol anchor (GPI-like-anchor). It has not been established whether Dictyosteliida make a glycosylphosphatidylinositol anchor (GPI-anchor) also, and whether their GPI-like-anchor modifications can be interconverted with GPI-anchor modifications in a resculpting process. It has not been established that the GPI-like-anchor modification in Dictyosteliida utilizes the same sequence motif.</text>
</comment>
<comment type="caution">
    <text evidence="2">Different sequence motifs predict both the N-glycosylation modification and the GPI- or GPI-like anchor modification for Asn-118. While it is chemically possible for both modifications to occur, it is not known whether it is enzymatically possible.</text>
</comment>
<evidence type="ECO:0000255" key="1"/>
<evidence type="ECO:0000305" key="2"/>
<proteinExistence type="inferred from homology"/>
<organism>
    <name type="scientific">Dictyostelium discoideum</name>
    <name type="common">Social amoeba</name>
    <dbReference type="NCBI Taxonomy" id="44689"/>
    <lineage>
        <taxon>Eukaryota</taxon>
        <taxon>Amoebozoa</taxon>
        <taxon>Evosea</taxon>
        <taxon>Eumycetozoa</taxon>
        <taxon>Dictyostelia</taxon>
        <taxon>Dictyosteliales</taxon>
        <taxon>Dictyosteliaceae</taxon>
        <taxon>Dictyostelium</taxon>
    </lineage>
</organism>
<keyword id="KW-1003">Cell membrane</keyword>
<keyword id="KW-0325">Glycoprotein</keyword>
<keyword id="KW-0336">GPI-anchor</keyword>
<keyword id="KW-0449">Lipoprotein</keyword>
<keyword id="KW-0472">Membrane</keyword>
<keyword id="KW-1185">Reference proteome</keyword>
<keyword id="KW-0732">Signal</keyword>
<sequence>MKFTKSLLLLIVAVFASSNAAETFSNFQVTNSEASSPCVTTPVELKVNTCQSACGSILNVLPVTGSTSKFTFNQFGAQDTKCAATPTSSNEFTCVDGKSKVAIGSTTYSVVCVPDKTNSSESDSSDSTRIGASFALAAAALLSMIAL</sequence>
<accession>Q54LC1</accession>